<reference key="1">
    <citation type="journal article" date="1995" name="Biochem. J.">
        <title>Molecular cloning and expression of catrocollastatin, a snake-venom protein from Crotalus atrox (western diamondback rattlesnake) which inhibits platelet adhesion to collagen.</title>
        <authorList>
            <person name="Zhou Q."/>
            <person name="Smith J.B."/>
            <person name="Grossman M.H."/>
        </authorList>
    </citation>
    <scope>NUCLEOTIDE SEQUENCE [MRNA]</scope>
    <scope>PROTEIN SEQUENCE OF 240-279 AND 507-537</scope>
    <scope>FUNCTION</scope>
    <scope>SUBUNIT</scope>
    <scope>SUBCELLULAR LOCATION</scope>
    <source>
        <tissue>Venom</tissue>
        <tissue>Venom gland</tissue>
    </source>
</reference>
<reference key="2">
    <citation type="journal article" date="2010" name="Toxicon">
        <title>Molecular cloning and characterization of cDNAs encoding metalloproteinases from snake venom glands.</title>
        <authorList>
            <person name="Jia Y."/>
            <person name="Perez J.C."/>
        </authorList>
    </citation>
    <scope>NUCLEOTIDE SEQUENCE [MRNA]</scope>
    <source>
        <tissue>Venom gland</tissue>
    </source>
</reference>
<reference key="3">
    <citation type="journal article" date="2009" name="J. Proteome Res.">
        <title>Exploring the venom proteome of the western diamondback rattlesnake, Crotalus atrox, via snake venomics and combinatorial peptide ligand library approaches.</title>
        <authorList>
            <person name="Calvete J.J."/>
            <person name="Fasoli E."/>
            <person name="Sanz L."/>
            <person name="Boschetti E."/>
            <person name="Righetti P.G."/>
        </authorList>
    </citation>
    <scope>PROTEIN SEQUENCE OF 199-208; 225-237; 257-274; 284-297; 298-312; 437-451; 532-539 AND 596-609</scope>
    <scope>IDENTIFICATION BY MASS SPECTROMETRY</scope>
    <scope>SUBCELLULAR LOCATION</scope>
    <source>
        <tissue>Venom</tissue>
    </source>
</reference>
<reference key="4">
    <citation type="journal article" date="2007" name="Endothelium">
        <title>cDNA cloning and some additional peptide characterization of a single-chain vascular apoptosis-inducing protein, VAP2.</title>
        <authorList>
            <person name="Masuda S."/>
            <person name="Maeda H."/>
            <person name="Miao J.Y."/>
            <person name="Hayashi H."/>
            <person name="Araki S."/>
        </authorList>
    </citation>
    <scope>PROTEIN SEQUENCE OF 226-236 AND 240-250</scope>
    <scope>SUBUNIT</scope>
    <scope>SUBCELLULAR LOCATION</scope>
    <source>
        <tissue>Venom</tissue>
        <tissue>Venom gland</tissue>
    </source>
</reference>
<reference key="5">
    <citation type="journal article" date="1997" name="Arch. Biochem. Biophys.">
        <title>Sequence and biological activity of catrocollastatin-C: a disintegrin-like/cysteine-rich two-domain protein from Crotalus atrox venom.</title>
        <authorList>
            <person name="Shimokawa K."/>
            <person name="Shannon J.D."/>
            <person name="Jia L.-G."/>
            <person name="Fox J.W."/>
        </authorList>
    </citation>
    <scope>PROTEIN SEQUENCE OF 394-609</scope>
    <scope>FUNCTION</scope>
    <scope>SUBCELLULAR LOCATION</scope>
    <scope>MASS SPECTROMETRY (CATROCOLLASTATIN-C)</scope>
    <scope>SYNTHESIS OF CYCLIC PEPTIDE OF 459-472</scope>
    <source>
        <tissue>Venom</tissue>
    </source>
</reference>
<reference key="6">
    <citation type="journal article" date="2000" name="Protein Sci.">
        <title>The disulfide bond pattern of catrocollastatin C, a disintegrin-like/cysteine-rich protein isolated from Crotalus atrox venom.</title>
        <authorList>
            <person name="Calvete J.J."/>
            <person name="Moreno-Murciano M.P."/>
            <person name="Sanz L."/>
            <person name="Jurgens M."/>
            <person name="Schrader M."/>
            <person name="Raida M."/>
            <person name="Benjamin D.C."/>
            <person name="Fox J.W."/>
        </authorList>
    </citation>
    <scope>PROTEIN SEQUENCE OF 394-609</scope>
    <scope>MASS SPECTROMETRY</scope>
    <scope>DISULFIDE BONDS (CATROCOLLASTATIN-C)</scope>
</reference>
<reference key="7">
    <citation type="journal article" date="1996" name="Biochem. Biophys. Res. Commun.">
        <title>The hemorrhagin catrocollastatin inhibits collagen-induced platelet aggregation by binding to collagen via its disintegrin-like domain.</title>
        <authorList>
            <person name="Zhou Q."/>
            <person name="Dangelmaier C."/>
            <person name="Smith J.B."/>
        </authorList>
    </citation>
    <scope>FUNCTION</scope>
    <scope>SUBUNIT</scope>
    <scope>INTERACTION WITH COLLAGEN</scope>
    <scope>SYNTHESIS OF CYCLIC PEPTIDE OF 459-472 (CATROCOLLASTATIN)</scope>
    <scope>REGION</scope>
</reference>
<reference key="8">
    <citation type="journal article" date="2006" name="Acta Crystallogr. F">
        <title>Crystallization and preliminary X-ray crystallographic analysis of two vascular apoptosis-inducing proteins (VAPs) from Crotalus atrox venom.</title>
        <authorList>
            <person name="Igarashi T."/>
            <person name="Oishi Y."/>
            <person name="Araki S."/>
            <person name="Mori H."/>
            <person name="Takeda S."/>
        </authorList>
    </citation>
    <scope>CRYSTALLIZATION</scope>
    <source>
        <tissue>Venom</tissue>
    </source>
</reference>
<reference evidence="21 22 23" key="9">
    <citation type="journal article" date="2007" name="FEBS Lett.">
        <title>Crystal structures of catrocollastatin/VAP2B reveal a dynamic, modular architecture of ADAM/adamalysin/reprolysin family proteins.</title>
        <authorList>
            <person name="Igarashi T."/>
            <person name="Araki S."/>
            <person name="Mori H."/>
            <person name="Takeda S."/>
        </authorList>
    </citation>
    <scope>X-RAY CRYSTALLOGRAPHY (2.15 ANGSTROMS) OF 191-609</scope>
    <scope>METAL-BINDING SITES</scope>
    <scope>DISULFIDE BONDS</scope>
    <scope>GLYCOSYLATION AT ASN-371</scope>
    <source>
        <tissue>Venom</tissue>
    </source>
</reference>
<feature type="signal peptide" evidence="3">
    <location>
        <begin position="1"/>
        <end position="20"/>
    </location>
</feature>
<feature type="propeptide" id="PRO_0000406909" evidence="1">
    <location>
        <begin position="21"/>
        <end position="189"/>
    </location>
</feature>
<feature type="chain" id="PRO_5000144525" description="Zinc metalloproteinase-disintegrin-like VAP2B">
    <location>
        <begin position="190"/>
        <end position="609"/>
    </location>
</feature>
<feature type="chain" id="PRO_0000406910" description="Disintegrin-like catrocollastatin-C">
    <location>
        <begin position="394"/>
        <end position="609"/>
    </location>
</feature>
<feature type="domain" description="Peptidase M12B" evidence="5">
    <location>
        <begin position="198"/>
        <end position="393"/>
    </location>
</feature>
<feature type="domain" description="Disintegrin" evidence="4">
    <location>
        <begin position="401"/>
        <end position="487"/>
    </location>
</feature>
<feature type="region of interest" description="Inhibits platelet aggregation" evidence="12">
    <location>
        <begin position="459"/>
        <end position="472"/>
    </location>
</feature>
<feature type="short sequence motif" description="D/ECD-tripeptide">
    <location>
        <begin position="465"/>
        <end position="467"/>
    </location>
</feature>
<feature type="active site" evidence="5 6">
    <location>
        <position position="334"/>
    </location>
</feature>
<feature type="binding site" evidence="8 21 22 23">
    <location>
        <position position="201"/>
    </location>
    <ligand>
        <name>Ca(2+)</name>
        <dbReference type="ChEBI" id="CHEBI:29108"/>
        <label>1</label>
    </ligand>
</feature>
<feature type="binding site" evidence="8 21 22 23">
    <location>
        <position position="285"/>
    </location>
    <ligand>
        <name>Ca(2+)</name>
        <dbReference type="ChEBI" id="CHEBI:29108"/>
        <label>1</label>
    </ligand>
</feature>
<feature type="binding site" evidence="8 21 22 23">
    <location>
        <position position="333"/>
    </location>
    <ligand>
        <name>Zn(2+)</name>
        <dbReference type="ChEBI" id="CHEBI:29105"/>
        <note>catalytic</note>
    </ligand>
</feature>
<feature type="binding site" evidence="8 21 22 23">
    <location>
        <position position="337"/>
    </location>
    <ligand>
        <name>Zn(2+)</name>
        <dbReference type="ChEBI" id="CHEBI:29105"/>
        <note>catalytic</note>
    </ligand>
</feature>
<feature type="binding site" evidence="8 21 22 23">
    <location>
        <position position="343"/>
    </location>
    <ligand>
        <name>Zn(2+)</name>
        <dbReference type="ChEBI" id="CHEBI:29105"/>
        <note>catalytic</note>
    </ligand>
</feature>
<feature type="binding site" evidence="8 21 22 23">
    <location>
        <position position="388"/>
    </location>
    <ligand>
        <name>Ca(2+)</name>
        <dbReference type="ChEBI" id="CHEBI:29108"/>
        <label>1</label>
    </ligand>
</feature>
<feature type="binding site" evidence="8 21 22 23">
    <location>
        <position position="391"/>
    </location>
    <ligand>
        <name>Ca(2+)</name>
        <dbReference type="ChEBI" id="CHEBI:29108"/>
        <label>1</label>
    </ligand>
</feature>
<feature type="binding site" evidence="8 21 22 23">
    <location>
        <position position="403"/>
    </location>
    <ligand>
        <name>Ca(2+)</name>
        <dbReference type="ChEBI" id="CHEBI:29108"/>
        <label>2</label>
    </ligand>
</feature>
<feature type="binding site" evidence="8 21 22 23">
    <location>
        <position position="406"/>
    </location>
    <ligand>
        <name>Ca(2+)</name>
        <dbReference type="ChEBI" id="CHEBI:29108"/>
        <label>2</label>
    </ligand>
</feature>
<feature type="binding site" evidence="8 21 22 23">
    <location>
        <position position="408"/>
    </location>
    <ligand>
        <name>Ca(2+)</name>
        <dbReference type="ChEBI" id="CHEBI:29108"/>
        <label>2</label>
    </ligand>
</feature>
<feature type="binding site" evidence="8 21 22 23">
    <location>
        <position position="410"/>
    </location>
    <ligand>
        <name>Ca(2+)</name>
        <dbReference type="ChEBI" id="CHEBI:29108"/>
        <label>2</label>
    </ligand>
</feature>
<feature type="binding site" evidence="8 21 22 23">
    <location>
        <position position="413"/>
    </location>
    <ligand>
        <name>Ca(2+)</name>
        <dbReference type="ChEBI" id="CHEBI:29108"/>
        <label>2</label>
    </ligand>
</feature>
<feature type="binding site" evidence="8 21 22 23">
    <location>
        <position position="416"/>
    </location>
    <ligand>
        <name>Ca(2+)</name>
        <dbReference type="ChEBI" id="CHEBI:29108"/>
        <label>2</label>
    </ligand>
</feature>
<feature type="binding site" evidence="8 21 22 23">
    <location>
        <position position="467"/>
    </location>
    <ligand>
        <name>Ca(2+)</name>
        <dbReference type="ChEBI" id="CHEBI:29108"/>
        <label>3</label>
    </ligand>
</feature>
<feature type="binding site" evidence="8 21 22 23">
    <location>
        <position position="468"/>
    </location>
    <ligand>
        <name>Ca(2+)</name>
        <dbReference type="ChEBI" id="CHEBI:29108"/>
        <label>3</label>
    </ligand>
</feature>
<feature type="binding site" evidence="8 21 22 23">
    <location>
        <position position="470"/>
    </location>
    <ligand>
        <name>Ca(2+)</name>
        <dbReference type="ChEBI" id="CHEBI:29108"/>
        <label>3</label>
    </ligand>
</feature>
<feature type="binding site" evidence="8 21 22 23">
    <location>
        <position position="482"/>
    </location>
    <ligand>
        <name>Ca(2+)</name>
        <dbReference type="ChEBI" id="CHEBI:29108"/>
        <label>3</label>
    </ligand>
</feature>
<feature type="binding site" evidence="8 21 22 23">
    <location>
        <position position="483"/>
    </location>
    <ligand>
        <name>Ca(2+)</name>
        <dbReference type="ChEBI" id="CHEBI:29108"/>
        <label>3</label>
    </ligand>
</feature>
<feature type="modified residue" description="Pyrrolidone carboxylic acid (Glu)" evidence="2">
    <location>
        <position position="190"/>
    </location>
</feature>
<feature type="glycosylation site" description="N-linked (GlcNAc...) asparagine" evidence="8 21 22 23">
    <location>
        <position position="371"/>
    </location>
</feature>
<feature type="disulfide bond" description="In zinc metalloproteinase-disintegrin-like VAP2B" evidence="8 21 22 23">
    <location>
        <begin position="308"/>
        <end position="388"/>
    </location>
</feature>
<feature type="disulfide bond" description="In zinc metalloproteinase-disintegrin-like VAP2B" evidence="8 21 22 23">
    <location>
        <begin position="348"/>
        <end position="372"/>
    </location>
</feature>
<feature type="disulfide bond" description="In zinc metalloproteinase-disintegrin-like VAP2B" evidence="8 21 22 23">
    <location>
        <begin position="350"/>
        <end position="355"/>
    </location>
</feature>
<feature type="disulfide bond" description="In zinc metalloproteinase-disintegrin-like VAP2B; alternate" evidence="8 21 22 23">
    <location>
        <begin position="404"/>
        <end position="433"/>
    </location>
</feature>
<feature type="disulfide bond" description="In disintegrin-like catrocollastatin-C; alternate" evidence="7">
    <location>
        <begin position="404"/>
        <end position="423"/>
    </location>
</feature>
<feature type="disulfide bond" description="In disintegrin-like catrocollastatin-C; alternate" evidence="7">
    <location>
        <begin position="415"/>
        <end position="433"/>
    </location>
</feature>
<feature type="disulfide bond" description="In zinc metalloproteinase-disintegrin-like VAP2B; alternate" evidence="8 21 22 23">
    <location>
        <begin position="415"/>
        <end position="428"/>
    </location>
</feature>
<feature type="disulfide bond" description="In zinc metalloproteinase-disintegrin-like VAP2B; alternate" evidence="8 21 22 23">
    <location>
        <begin position="417"/>
        <end position="423"/>
    </location>
</feature>
<feature type="disulfide bond" description="In zinc metalloproteinase-disintegrin-like VAP2B" evidence="8 21 22 23">
    <location>
        <begin position="427"/>
        <end position="450"/>
    </location>
</feature>
<feature type="disulfide bond" description="In zinc metalloproteinase-disintegrin-like VAP2B" evidence="8 21 22 23">
    <location>
        <begin position="441"/>
        <end position="447"/>
    </location>
</feature>
<feature type="disulfide bond" description="In zinc metalloproteinase-disintegrin-like VAP2B" evidence="8 21 22 23">
    <location>
        <begin position="446"/>
        <end position="472"/>
    </location>
</feature>
<feature type="disulfide bond" description="In both disintegrin-like catrocollastatin-C and zinc metalloproteinase-disintegrin-like VAP2B" evidence="7 8 21 22 23">
    <location>
        <begin position="459"/>
        <end position="479"/>
    </location>
</feature>
<feature type="disulfide bond" description="In zinc metalloproteinase-disintegrin-like VAP2B; alternate" evidence="8 21 22 23">
    <location>
        <begin position="466"/>
        <end position="498"/>
    </location>
</feature>
<feature type="disulfide bond" description="In disintegrin-like catrocollastatin-C; alternate" evidence="7">
    <location>
        <begin position="466"/>
        <end position="491"/>
    </location>
</feature>
<feature type="disulfide bond" description="In zinc metalloproteinase-disintegrin-like VAP2B; alternate" evidence="8 21 22 23">
    <location>
        <begin position="491"/>
        <end position="503"/>
    </location>
</feature>
<feature type="disulfide bond" description="In disintegrin-like catrocollastatin-C" evidence="7">
    <location>
        <begin position="498"/>
        <end position="503"/>
    </location>
</feature>
<feature type="disulfide bond" description="In zinc metalloproteinase-disintegrin-like VAP2B; alternate" evidence="8 21 22 23">
    <location>
        <begin position="510"/>
        <end position="560"/>
    </location>
</feature>
<feature type="disulfide bond" description="In disintegrin-like catrocollastatin-C; alternate" evidence="7">
    <location>
        <begin position="510"/>
        <end position="525"/>
    </location>
</feature>
<feature type="disulfide bond" description="In zinc metalloproteinase-disintegrin-like VAP2B; alternate" evidence="8 21 22 23">
    <location>
        <begin position="525"/>
        <end position="571"/>
    </location>
</feature>
<feature type="disulfide bond" description="In zinc metalloproteinase-disintegrin-like VAP2B; alternate" evidence="8 21 22 23">
    <location>
        <begin position="538"/>
        <end position="548"/>
    </location>
</feature>
<feature type="disulfide bond" description="In disintegrin-like catrocollastatin-C; alternate" evidence="7">
    <location>
        <begin position="548"/>
        <end position="555"/>
    </location>
</feature>
<feature type="disulfide bond" description="In zinc metalloproteinase-disintegrin-like VAP2B; alternate" evidence="8 21 22 23">
    <location>
        <begin position="555"/>
        <end position="597"/>
    </location>
</feature>
<feature type="disulfide bond" description="In disintegrin-like catrocollastatin-C" evidence="7">
    <location>
        <begin position="560"/>
        <end position="571"/>
    </location>
</feature>
<feature type="disulfide bond" description="In zinc metalloproteinase-disintegrin-like VAP2B; alternate" evidence="8 21 22 23">
    <location>
        <begin position="591"/>
        <end position="602"/>
    </location>
</feature>
<feature type="disulfide bond" description="In disintegrin-like catrocollastatin-C" evidence="7">
    <location>
        <begin position="597"/>
        <end position="602"/>
    </location>
</feature>
<feature type="sequence conflict" description="In Ref. 2; ACV83931." evidence="17" ref="2">
    <original>VI</original>
    <variation>IV</variation>
    <location>
        <begin position="33"/>
        <end position="34"/>
    </location>
</feature>
<feature type="sequence conflict" description="In Ref. 2; ACV83931." evidence="17" ref="2">
    <original>G</original>
    <variation>E</variation>
    <location>
        <position position="71"/>
    </location>
</feature>
<feature type="sequence conflict" description="In Ref. 2; ACV83931." evidence="17" ref="2">
    <original>G</original>
    <variation>Q</variation>
    <location>
        <position position="75"/>
    </location>
</feature>
<feature type="sequence conflict" description="In Ref. 2; ACV83931." evidence="17" ref="2">
    <original>P</original>
    <variation>S</variation>
    <location>
        <position position="144"/>
    </location>
</feature>
<feature type="sequence conflict" description="In Ref. 2; ACV83931." evidence="17" ref="2">
    <original>F</original>
    <variation>V</variation>
    <location>
        <position position="203"/>
    </location>
</feature>
<feature type="sequence conflict" description="In Ref. 2; ACV83931." evidence="17" ref="2">
    <original>D</original>
    <variation>N</variation>
    <location>
        <position position="217"/>
    </location>
</feature>
<feature type="sequence conflict" description="In Ref. 2; ACV83931." evidence="17" ref="2">
    <original>M</original>
    <variation>V</variation>
    <location>
        <position position="307"/>
    </location>
</feature>
<feature type="sequence conflict" description="In Ref. 1; AA sequence." evidence="17" ref="1">
    <original>YH</original>
    <variation>VL</variation>
    <location>
        <begin position="507"/>
        <end position="508"/>
    </location>
</feature>
<feature type="sequence conflict" description="In Ref. 1; AA sequence." evidence="17" ref="1">
    <original>A</original>
    <variation>G</variation>
    <location>
        <position position="516"/>
    </location>
</feature>
<feature type="sequence conflict" description="In Ref. 1; AA sequence." evidence="17" ref="1">
    <original>Y</original>
    <variation>V</variation>
    <location>
        <position position="519"/>
    </location>
</feature>
<feature type="sequence conflict" description="In Ref. 1; AA sequence." evidence="17" ref="1">
    <original>S</original>
    <variation>D</variation>
    <location>
        <position position="524"/>
    </location>
</feature>
<feature type="sequence conflict" description="In Ref. 2; ACV83931." evidence="17" ref="2">
    <original>C</original>
    <variation>G</variation>
    <location>
        <position position="597"/>
    </location>
</feature>
<feature type="strand" evidence="24">
    <location>
        <begin position="198"/>
        <end position="206"/>
    </location>
</feature>
<feature type="helix" evidence="24">
    <location>
        <begin position="208"/>
        <end position="213"/>
    </location>
</feature>
<feature type="turn" evidence="24">
    <location>
        <begin position="214"/>
        <end position="216"/>
    </location>
</feature>
<feature type="helix" evidence="24">
    <location>
        <begin position="218"/>
        <end position="237"/>
    </location>
</feature>
<feature type="turn" evidence="24">
    <location>
        <begin position="238"/>
        <end position="240"/>
    </location>
</feature>
<feature type="strand" evidence="24">
    <location>
        <begin position="241"/>
        <end position="250"/>
    </location>
</feature>
<feature type="helix" evidence="24">
    <location>
        <begin position="263"/>
        <end position="276"/>
    </location>
</feature>
<feature type="helix" evidence="24">
    <location>
        <begin position="278"/>
        <end position="281"/>
    </location>
</feature>
<feature type="strand" evidence="24">
    <location>
        <begin position="285"/>
        <end position="293"/>
    </location>
</feature>
<feature type="strand" evidence="24">
    <location>
        <begin position="299"/>
        <end position="302"/>
    </location>
</feature>
<feature type="turn" evidence="24">
    <location>
        <begin position="310"/>
        <end position="312"/>
    </location>
</feature>
<feature type="strand" evidence="24">
    <location>
        <begin position="313"/>
        <end position="318"/>
    </location>
</feature>
<feature type="helix" evidence="24">
    <location>
        <begin position="324"/>
        <end position="338"/>
    </location>
</feature>
<feature type="strand" evidence="24">
    <location>
        <begin position="351"/>
        <end position="353"/>
    </location>
</feature>
<feature type="strand" evidence="24">
    <location>
        <begin position="358"/>
        <end position="360"/>
    </location>
</feature>
<feature type="strand" evidence="25">
    <location>
        <begin position="363"/>
        <end position="365"/>
    </location>
</feature>
<feature type="helix" evidence="24">
    <location>
        <begin position="371"/>
        <end position="384"/>
    </location>
</feature>
<feature type="helix" evidence="24">
    <location>
        <begin position="387"/>
        <end position="389"/>
    </location>
</feature>
<feature type="helix" evidence="24">
    <location>
        <begin position="395"/>
        <end position="397"/>
    </location>
</feature>
<feature type="strand" evidence="24">
    <location>
        <begin position="406"/>
        <end position="408"/>
    </location>
</feature>
<feature type="turn" evidence="24">
    <location>
        <begin position="420"/>
        <end position="422"/>
    </location>
</feature>
<feature type="turn" evidence="24">
    <location>
        <begin position="430"/>
        <end position="432"/>
    </location>
</feature>
<feature type="strand" evidence="24">
    <location>
        <begin position="442"/>
        <end position="444"/>
    </location>
</feature>
<feature type="strand" evidence="25">
    <location>
        <begin position="447"/>
        <end position="452"/>
    </location>
</feature>
<feature type="strand" evidence="24">
    <location>
        <begin position="458"/>
        <end position="460"/>
    </location>
</feature>
<feature type="turn" evidence="24">
    <location>
        <begin position="492"/>
        <end position="495"/>
    </location>
</feature>
<feature type="helix" evidence="24">
    <location>
        <begin position="506"/>
        <end position="514"/>
    </location>
</feature>
<feature type="strand" evidence="24">
    <location>
        <begin position="518"/>
        <end position="520"/>
    </location>
</feature>
<feature type="helix" evidence="24">
    <location>
        <begin position="523"/>
        <end position="526"/>
    </location>
</feature>
<feature type="helix" evidence="24">
    <location>
        <begin position="527"/>
        <end position="530"/>
    </location>
</feature>
<feature type="strand" evidence="24">
    <location>
        <begin position="533"/>
        <end position="535"/>
    </location>
</feature>
<feature type="strand" evidence="24">
    <location>
        <begin position="538"/>
        <end position="541"/>
    </location>
</feature>
<feature type="strand" evidence="24">
    <location>
        <begin position="544"/>
        <end position="546"/>
    </location>
</feature>
<feature type="helix" evidence="24">
    <location>
        <begin position="550"/>
        <end position="555"/>
    </location>
</feature>
<feature type="strand" evidence="24">
    <location>
        <begin position="560"/>
        <end position="562"/>
    </location>
</feature>
<feature type="strand" evidence="24">
    <location>
        <begin position="569"/>
        <end position="572"/>
    </location>
</feature>
<feature type="turn" evidence="24">
    <location>
        <begin position="580"/>
        <end position="583"/>
    </location>
</feature>
<feature type="strand" evidence="24">
    <location>
        <begin position="590"/>
        <end position="592"/>
    </location>
</feature>
<feature type="strand" evidence="24">
    <location>
        <begin position="595"/>
        <end position="598"/>
    </location>
</feature>
<feature type="strand" evidence="24">
    <location>
        <begin position="601"/>
        <end position="604"/>
    </location>
</feature>
<feature type="helix" evidence="24">
    <location>
        <begin position="605"/>
        <end position="607"/>
    </location>
</feature>
<sequence>MIQVLLVTICLAAFPYQGSSIILESGNVNDYEVIYPRKVTALPKGAVQPKYEDAMQYELKVNGEPVVLHLGKNKGLFSKDYSETHYSPDGREITTYPLVEDHCYYHGRIENDADSTASISACNGLKGHFKLQGEMYLIEPLKLPDSEAHAVYKYENVEKEDEALKMCGVTQNWESYEPIKKASQLVVTAEHQKYNPFRFVELFLVVDKAMVTKNNGDLDKIKTRMYEIVNTVNEIYRYMYIHVALVGLEIWSNEDKITVKPEAGYTLNAFGEWRKTDLLTRKKHDNAQLLTAIDLDRVIGLAYVGSMCHPKRSTGIIQDYSEINLVVAVIMAHEMGHNLGINHDSGYCSCGDYACIMRPEISPEPSTFFSNCSYFECWDFIMNHNPECILNEPLGTDIISPPVCGNELLEVGEECDCGTPENCQNECCDAATCKLKSGSQCGHGDCCEQCKFSKSGTECRASMSECDPAEHCTGQSSECPADVFHKNGQPCLDNYGYCYNGNCPIMYHQCYDLFGADVYEAEDSCFERNQKGNYYGYCRKENGNKIPCAPEDVKCGRLYCKDNSPGQNNPCKMFYSNEDEHKGMVLPGTKCADGKVCSNGHCVDVATAY</sequence>
<dbReference type="EC" id="3.4.24.-"/>
<dbReference type="EMBL" id="U21003">
    <property type="protein sequence ID" value="AAC59672.1"/>
    <property type="molecule type" value="mRNA"/>
</dbReference>
<dbReference type="EMBL" id="GQ451437">
    <property type="protein sequence ID" value="ACV83931.1"/>
    <property type="molecule type" value="mRNA"/>
</dbReference>
<dbReference type="PIR" id="S55264">
    <property type="entry name" value="S55264"/>
</dbReference>
<dbReference type="PIR" id="S55270">
    <property type="entry name" value="S55270"/>
</dbReference>
<dbReference type="PDB" id="2DW0">
    <property type="method" value="X-ray"/>
    <property type="resolution" value="2.15 A"/>
    <property type="chains" value="A/B=191-609"/>
</dbReference>
<dbReference type="PDB" id="2DW1">
    <property type="method" value="X-ray"/>
    <property type="resolution" value="2.50 A"/>
    <property type="chains" value="A/B=191-609"/>
</dbReference>
<dbReference type="PDB" id="2DW2">
    <property type="method" value="X-ray"/>
    <property type="resolution" value="2.70 A"/>
    <property type="chains" value="A/B=191-609"/>
</dbReference>
<dbReference type="PDBsum" id="2DW0"/>
<dbReference type="PDBsum" id="2DW1"/>
<dbReference type="PDBsum" id="2DW2"/>
<dbReference type="SMR" id="Q90282"/>
<dbReference type="MEROPS" id="M12.332"/>
<dbReference type="iPTMnet" id="Q90282"/>
<dbReference type="EvolutionaryTrace" id="Q90282"/>
<dbReference type="GO" id="GO:0005576">
    <property type="term" value="C:extracellular region"/>
    <property type="evidence" value="ECO:0007669"/>
    <property type="project" value="UniProtKB-SubCell"/>
</dbReference>
<dbReference type="GO" id="GO:0005886">
    <property type="term" value="C:plasma membrane"/>
    <property type="evidence" value="ECO:0007669"/>
    <property type="project" value="TreeGrafter"/>
</dbReference>
<dbReference type="GO" id="GO:0046872">
    <property type="term" value="F:metal ion binding"/>
    <property type="evidence" value="ECO:0007669"/>
    <property type="project" value="UniProtKB-KW"/>
</dbReference>
<dbReference type="GO" id="GO:0004222">
    <property type="term" value="F:metalloendopeptidase activity"/>
    <property type="evidence" value="ECO:0007669"/>
    <property type="project" value="InterPro"/>
</dbReference>
<dbReference type="GO" id="GO:0090729">
    <property type="term" value="F:toxin activity"/>
    <property type="evidence" value="ECO:0007669"/>
    <property type="project" value="UniProtKB-KW"/>
</dbReference>
<dbReference type="GO" id="GO:0006508">
    <property type="term" value="P:proteolysis"/>
    <property type="evidence" value="ECO:0007669"/>
    <property type="project" value="UniProtKB-KW"/>
</dbReference>
<dbReference type="CDD" id="cd04269">
    <property type="entry name" value="ZnMc_adamalysin_II_like"/>
    <property type="match status" value="1"/>
</dbReference>
<dbReference type="FunFam" id="3.40.390.10:FF:000002">
    <property type="entry name" value="Disintegrin and metalloproteinase domain-containing protein 22"/>
    <property type="match status" value="1"/>
</dbReference>
<dbReference type="FunFam" id="4.10.70.10:FF:000001">
    <property type="entry name" value="Disintegrin and metalloproteinase domain-containing protein 22"/>
    <property type="match status" value="1"/>
</dbReference>
<dbReference type="Gene3D" id="3.40.390.10">
    <property type="entry name" value="Collagenase (Catalytic Domain)"/>
    <property type="match status" value="1"/>
</dbReference>
<dbReference type="Gene3D" id="4.10.70.10">
    <property type="entry name" value="Disintegrin domain"/>
    <property type="match status" value="1"/>
</dbReference>
<dbReference type="InterPro" id="IPR006586">
    <property type="entry name" value="ADAM_Cys-rich"/>
</dbReference>
<dbReference type="InterPro" id="IPR018358">
    <property type="entry name" value="Disintegrin_CS"/>
</dbReference>
<dbReference type="InterPro" id="IPR001762">
    <property type="entry name" value="Disintegrin_dom"/>
</dbReference>
<dbReference type="InterPro" id="IPR036436">
    <property type="entry name" value="Disintegrin_dom_sf"/>
</dbReference>
<dbReference type="InterPro" id="IPR024079">
    <property type="entry name" value="MetalloPept_cat_dom_sf"/>
</dbReference>
<dbReference type="InterPro" id="IPR001590">
    <property type="entry name" value="Peptidase_M12B"/>
</dbReference>
<dbReference type="InterPro" id="IPR002870">
    <property type="entry name" value="Peptidase_M12B_N"/>
</dbReference>
<dbReference type="InterPro" id="IPR034027">
    <property type="entry name" value="Reprolysin_adamalysin"/>
</dbReference>
<dbReference type="PANTHER" id="PTHR11905">
    <property type="entry name" value="ADAM A DISINTEGRIN AND METALLOPROTEASE DOMAIN"/>
    <property type="match status" value="1"/>
</dbReference>
<dbReference type="PANTHER" id="PTHR11905:SF32">
    <property type="entry name" value="DISINTEGRIN AND METALLOPROTEINASE DOMAIN-CONTAINING PROTEIN 28"/>
    <property type="match status" value="1"/>
</dbReference>
<dbReference type="Pfam" id="PF08516">
    <property type="entry name" value="ADAM_CR"/>
    <property type="match status" value="1"/>
</dbReference>
<dbReference type="Pfam" id="PF00200">
    <property type="entry name" value="Disintegrin"/>
    <property type="match status" value="1"/>
</dbReference>
<dbReference type="Pfam" id="PF01562">
    <property type="entry name" value="Pep_M12B_propep"/>
    <property type="match status" value="1"/>
</dbReference>
<dbReference type="Pfam" id="PF01421">
    <property type="entry name" value="Reprolysin"/>
    <property type="match status" value="1"/>
</dbReference>
<dbReference type="PRINTS" id="PR00289">
    <property type="entry name" value="DISINTEGRIN"/>
</dbReference>
<dbReference type="SMART" id="SM00608">
    <property type="entry name" value="ACR"/>
    <property type="match status" value="1"/>
</dbReference>
<dbReference type="SMART" id="SM00050">
    <property type="entry name" value="DISIN"/>
    <property type="match status" value="1"/>
</dbReference>
<dbReference type="SUPFAM" id="SSF57552">
    <property type="entry name" value="Blood coagulation inhibitor (disintegrin)"/>
    <property type="match status" value="1"/>
</dbReference>
<dbReference type="SUPFAM" id="SSF55486">
    <property type="entry name" value="Metalloproteases ('zincins'), catalytic domain"/>
    <property type="match status" value="1"/>
</dbReference>
<dbReference type="PROSITE" id="PS50215">
    <property type="entry name" value="ADAM_MEPRO"/>
    <property type="match status" value="1"/>
</dbReference>
<dbReference type="PROSITE" id="PS00427">
    <property type="entry name" value="DISINTEGRIN_1"/>
    <property type="match status" value="1"/>
</dbReference>
<dbReference type="PROSITE" id="PS50214">
    <property type="entry name" value="DISINTEGRIN_2"/>
    <property type="match status" value="1"/>
</dbReference>
<dbReference type="PROSITE" id="PS00142">
    <property type="entry name" value="ZINC_PROTEASE"/>
    <property type="match status" value="1"/>
</dbReference>
<proteinExistence type="evidence at protein level"/>
<protein>
    <recommendedName>
        <fullName evidence="18">Zinc metalloproteinase-disintegrin-like VAP2B</fullName>
        <ecNumber>3.4.24.-</ecNumber>
    </recommendedName>
    <alternativeName>
        <fullName evidence="15 16">Catrocollastatin</fullName>
    </alternativeName>
    <alternativeName>
        <fullName>Snake venom metalloproteinase</fullName>
        <shortName>SVMP</shortName>
    </alternativeName>
    <alternativeName>
        <fullName evidence="14">Vascular apoptosis-inducing protein 2B</fullName>
        <shortName evidence="14">VAP2B</shortName>
    </alternativeName>
    <component>
        <recommendedName>
            <fullName>Disintegrin-like catrocollastatin-C</fullName>
        </recommendedName>
    </component>
</protein>
<evidence type="ECO:0000250" key="1"/>
<evidence type="ECO:0000250" key="2">
    <source>
        <dbReference type="UniProtKB" id="O93523"/>
    </source>
</evidence>
<evidence type="ECO:0000255" key="3"/>
<evidence type="ECO:0000255" key="4">
    <source>
        <dbReference type="PROSITE-ProRule" id="PRU00068"/>
    </source>
</evidence>
<evidence type="ECO:0000255" key="5">
    <source>
        <dbReference type="PROSITE-ProRule" id="PRU00276"/>
    </source>
</evidence>
<evidence type="ECO:0000255" key="6">
    <source>
        <dbReference type="PROSITE-ProRule" id="PRU10095"/>
    </source>
</evidence>
<evidence type="ECO:0000269" key="7">
    <source>
    </source>
</evidence>
<evidence type="ECO:0000269" key="8">
    <source>
    </source>
</evidence>
<evidence type="ECO:0000269" key="9">
    <source>
    </source>
</evidence>
<evidence type="ECO:0000269" key="10">
    <source>
    </source>
</evidence>
<evidence type="ECO:0000269" key="11">
    <source>
    </source>
</evidence>
<evidence type="ECO:0000269" key="12">
    <source>
    </source>
</evidence>
<evidence type="ECO:0000269" key="13">
    <source>
    </source>
</evidence>
<evidence type="ECO:0000303" key="14">
    <source>
    </source>
</evidence>
<evidence type="ECO:0000303" key="15">
    <source>
    </source>
</evidence>
<evidence type="ECO:0000303" key="16">
    <source>
    </source>
</evidence>
<evidence type="ECO:0000305" key="17"/>
<evidence type="ECO:0000305" key="18">
    <source>
    </source>
</evidence>
<evidence type="ECO:0000305" key="19">
    <source>
    </source>
</evidence>
<evidence type="ECO:0000305" key="20">
    <source>
    </source>
</evidence>
<evidence type="ECO:0007744" key="21">
    <source>
        <dbReference type="PDB" id="2DW0"/>
    </source>
</evidence>
<evidence type="ECO:0007744" key="22">
    <source>
        <dbReference type="PDB" id="2DW1"/>
    </source>
</evidence>
<evidence type="ECO:0007744" key="23">
    <source>
        <dbReference type="PDB" id="2DW2"/>
    </source>
</evidence>
<evidence type="ECO:0007829" key="24">
    <source>
        <dbReference type="PDB" id="2DW0"/>
    </source>
</evidence>
<evidence type="ECO:0007829" key="25">
    <source>
        <dbReference type="PDB" id="2DW1"/>
    </source>
</evidence>
<comment type="function">
    <molecule>Zinc metalloproteinase-disintegrin-like VAP2B</molecule>
    <text>Zinc metalloprotease that abolishes platelet aggregation induced by collagen, but has no effect on platelet aggregation induced by ADP or thromboxane analog. This inhibition may be due to its ability to bind collagen and block the binding site on collagen for platelets and/or to its ability to bind to the platelet alpha-2/beta-1 collagen receptor (ITGA2/ITGB1) to block its interaction with collagen and hence prevent platelet stimulation.</text>
</comment>
<comment type="function">
    <molecule>Disintegrin-like catrocollastatin-C</molecule>
    <text>Abolishes platelet aggregation induced by collagen (IC(50)=66 nM) but not ADP-stimulated platelet aggregation. This inhibition may be due to its ability to bind collagen and block the binding site on collagen for platelets and/or to its ability to bind to the platelet alpha-2/beta-1 collagen receptor (ITGA2/ITGB1) to block its interaction with collagen and hence prevent platelet stimulation.</text>
</comment>
<comment type="cofactor">
    <cofactor evidence="1">
        <name>Zn(2+)</name>
        <dbReference type="ChEBI" id="CHEBI:29105"/>
    </cofactor>
    <text evidence="1">Binds 1 zinc ion per subunit.</text>
</comment>
<comment type="subunit">
    <text evidence="8 9 11 12">Monomer (PubMed:17485084) or heterodimer; non-covalently linked (PubMed:17497365). Interacts with fibrillar collagen.</text>
</comment>
<comment type="subcellular location">
    <subcellularLocation>
        <location evidence="11 13">Secreted</location>
    </subcellularLocation>
</comment>
<comment type="tissue specificity">
    <text evidence="19 20">Expressed by the venom gland.</text>
</comment>
<comment type="PTM">
    <text evidence="10">The N-terminus is blocked.</text>
</comment>
<comment type="mass spectrometry">
    <molecule>Disintegrin-like catrocollastatin-C</molecule>
    <text>Average mass.</text>
</comment>
<comment type="mass spectrometry">
    <molecule>Disintegrin-like catrocollastatin-C</molecule>
</comment>
<comment type="miscellaneous">
    <text>Catrocollastatin-C represents at least 0.5% of the total protein in the venom.</text>
</comment>
<comment type="similarity">
    <text evidence="17">Belongs to the venom metalloproteinase (M12B) family. P-III subfamily. P-IIIb sub-subfamily.</text>
</comment>
<accession>Q90282</accession>
<accession>C9E1R6</accession>
<accession>Q7LZK3</accession>
<name>VM3VB_CROAT</name>
<organism>
    <name type="scientific">Crotalus atrox</name>
    <name type="common">Western diamondback rattlesnake</name>
    <dbReference type="NCBI Taxonomy" id="8730"/>
    <lineage>
        <taxon>Eukaryota</taxon>
        <taxon>Metazoa</taxon>
        <taxon>Chordata</taxon>
        <taxon>Craniata</taxon>
        <taxon>Vertebrata</taxon>
        <taxon>Euteleostomi</taxon>
        <taxon>Lepidosauria</taxon>
        <taxon>Squamata</taxon>
        <taxon>Bifurcata</taxon>
        <taxon>Unidentata</taxon>
        <taxon>Episquamata</taxon>
        <taxon>Toxicofera</taxon>
        <taxon>Serpentes</taxon>
        <taxon>Colubroidea</taxon>
        <taxon>Viperidae</taxon>
        <taxon>Crotalinae</taxon>
        <taxon>Crotalus</taxon>
    </lineage>
</organism>
<keyword id="KW-0002">3D-structure</keyword>
<keyword id="KW-0106">Calcium</keyword>
<keyword id="KW-1217">Cell adhesion impairing toxin</keyword>
<keyword id="KW-0903">Direct protein sequencing</keyword>
<keyword id="KW-1015">Disulfide bond</keyword>
<keyword id="KW-0325">Glycoprotein</keyword>
<keyword id="KW-1199">Hemostasis impairing toxin</keyword>
<keyword id="KW-0378">Hydrolase</keyword>
<keyword id="KW-0479">Metal-binding</keyword>
<keyword id="KW-0482">Metalloprotease</keyword>
<keyword id="KW-1201">Platelet aggregation inhibiting toxin</keyword>
<keyword id="KW-0645">Protease</keyword>
<keyword id="KW-0873">Pyrrolidone carboxylic acid</keyword>
<keyword id="KW-0964">Secreted</keyword>
<keyword id="KW-0732">Signal</keyword>
<keyword id="KW-0800">Toxin</keyword>
<keyword id="KW-0862">Zinc</keyword>
<keyword id="KW-0865">Zymogen</keyword>